<dbReference type="EMBL" id="AE017226">
    <property type="protein sequence ID" value="AAS11261.1"/>
    <property type="molecule type" value="Genomic_DNA"/>
</dbReference>
<dbReference type="RefSeq" id="NP_971380.1">
    <property type="nucleotide sequence ID" value="NC_002967.9"/>
</dbReference>
<dbReference type="RefSeq" id="WP_002669998.1">
    <property type="nucleotide sequence ID" value="NC_002967.9"/>
</dbReference>
<dbReference type="SMR" id="Q73PM9"/>
<dbReference type="STRING" id="243275.TDE_0770"/>
<dbReference type="PaxDb" id="243275-TDE_0770"/>
<dbReference type="GeneID" id="2740310"/>
<dbReference type="KEGG" id="tde:TDE_0770"/>
<dbReference type="PATRIC" id="fig|243275.7.peg.743"/>
<dbReference type="eggNOG" id="COG0090">
    <property type="taxonomic scope" value="Bacteria"/>
</dbReference>
<dbReference type="HOGENOM" id="CLU_036235_2_1_12"/>
<dbReference type="OrthoDB" id="9778722at2"/>
<dbReference type="Proteomes" id="UP000008212">
    <property type="component" value="Chromosome"/>
</dbReference>
<dbReference type="GO" id="GO:0015934">
    <property type="term" value="C:large ribosomal subunit"/>
    <property type="evidence" value="ECO:0007669"/>
    <property type="project" value="InterPro"/>
</dbReference>
<dbReference type="GO" id="GO:0019843">
    <property type="term" value="F:rRNA binding"/>
    <property type="evidence" value="ECO:0007669"/>
    <property type="project" value="UniProtKB-UniRule"/>
</dbReference>
<dbReference type="GO" id="GO:0003735">
    <property type="term" value="F:structural constituent of ribosome"/>
    <property type="evidence" value="ECO:0007669"/>
    <property type="project" value="InterPro"/>
</dbReference>
<dbReference type="GO" id="GO:0016740">
    <property type="term" value="F:transferase activity"/>
    <property type="evidence" value="ECO:0007669"/>
    <property type="project" value="InterPro"/>
</dbReference>
<dbReference type="GO" id="GO:0002181">
    <property type="term" value="P:cytoplasmic translation"/>
    <property type="evidence" value="ECO:0007669"/>
    <property type="project" value="TreeGrafter"/>
</dbReference>
<dbReference type="FunFam" id="2.30.30.30:FF:000001">
    <property type="entry name" value="50S ribosomal protein L2"/>
    <property type="match status" value="1"/>
</dbReference>
<dbReference type="FunFam" id="2.40.50.140:FF:000003">
    <property type="entry name" value="50S ribosomal protein L2"/>
    <property type="match status" value="1"/>
</dbReference>
<dbReference type="FunFam" id="4.10.950.10:FF:000001">
    <property type="entry name" value="50S ribosomal protein L2"/>
    <property type="match status" value="1"/>
</dbReference>
<dbReference type="Gene3D" id="2.30.30.30">
    <property type="match status" value="1"/>
</dbReference>
<dbReference type="Gene3D" id="2.40.50.140">
    <property type="entry name" value="Nucleic acid-binding proteins"/>
    <property type="match status" value="1"/>
</dbReference>
<dbReference type="Gene3D" id="4.10.950.10">
    <property type="entry name" value="Ribosomal protein L2, domain 3"/>
    <property type="match status" value="1"/>
</dbReference>
<dbReference type="HAMAP" id="MF_01320_B">
    <property type="entry name" value="Ribosomal_uL2_B"/>
    <property type="match status" value="1"/>
</dbReference>
<dbReference type="InterPro" id="IPR012340">
    <property type="entry name" value="NA-bd_OB-fold"/>
</dbReference>
<dbReference type="InterPro" id="IPR014722">
    <property type="entry name" value="Rib_uL2_dom2"/>
</dbReference>
<dbReference type="InterPro" id="IPR002171">
    <property type="entry name" value="Ribosomal_uL2"/>
</dbReference>
<dbReference type="InterPro" id="IPR005880">
    <property type="entry name" value="Ribosomal_uL2_bac/org-type"/>
</dbReference>
<dbReference type="InterPro" id="IPR022669">
    <property type="entry name" value="Ribosomal_uL2_C"/>
</dbReference>
<dbReference type="InterPro" id="IPR014726">
    <property type="entry name" value="Ribosomal_uL2_dom3"/>
</dbReference>
<dbReference type="InterPro" id="IPR022666">
    <property type="entry name" value="Ribosomal_uL2_RNA-bd_dom"/>
</dbReference>
<dbReference type="InterPro" id="IPR008991">
    <property type="entry name" value="Translation_prot_SH3-like_sf"/>
</dbReference>
<dbReference type="NCBIfam" id="TIGR01171">
    <property type="entry name" value="rplB_bact"/>
    <property type="match status" value="1"/>
</dbReference>
<dbReference type="PANTHER" id="PTHR13691:SF5">
    <property type="entry name" value="LARGE RIBOSOMAL SUBUNIT PROTEIN UL2M"/>
    <property type="match status" value="1"/>
</dbReference>
<dbReference type="PANTHER" id="PTHR13691">
    <property type="entry name" value="RIBOSOMAL PROTEIN L2"/>
    <property type="match status" value="1"/>
</dbReference>
<dbReference type="Pfam" id="PF00181">
    <property type="entry name" value="Ribosomal_L2"/>
    <property type="match status" value="1"/>
</dbReference>
<dbReference type="Pfam" id="PF03947">
    <property type="entry name" value="Ribosomal_L2_C"/>
    <property type="match status" value="1"/>
</dbReference>
<dbReference type="PIRSF" id="PIRSF002158">
    <property type="entry name" value="Ribosomal_L2"/>
    <property type="match status" value="1"/>
</dbReference>
<dbReference type="SMART" id="SM01383">
    <property type="entry name" value="Ribosomal_L2"/>
    <property type="match status" value="1"/>
</dbReference>
<dbReference type="SMART" id="SM01382">
    <property type="entry name" value="Ribosomal_L2_C"/>
    <property type="match status" value="1"/>
</dbReference>
<dbReference type="SUPFAM" id="SSF50249">
    <property type="entry name" value="Nucleic acid-binding proteins"/>
    <property type="match status" value="1"/>
</dbReference>
<dbReference type="SUPFAM" id="SSF50104">
    <property type="entry name" value="Translation proteins SH3-like domain"/>
    <property type="match status" value="1"/>
</dbReference>
<protein>
    <recommendedName>
        <fullName evidence="1">Large ribosomal subunit protein uL2</fullName>
    </recommendedName>
    <alternativeName>
        <fullName evidence="3">50S ribosomal protein L2</fullName>
    </alternativeName>
</protein>
<proteinExistence type="inferred from homology"/>
<name>RL2_TREDE</name>
<sequence length="276" mass="30304">MALKEYKPMTPGLRGRIDLRKDEITAQKPEKSLTTGKKNRAGRDSRGRISVRGQGGGHKQKYRQIDFKRNKYGIPGTVRTIEYDPNRSANIALIFYADGEKRYIIAPKGLKIGQKIMSGEMATLDVANALPLEAIPVGFTVHNIELTIGRGGQMARSAGAGALVAAKEGEYVTIRLPSGETRLVNKKCYATIGEVGNEDHMNTSLGKAGRSRWLGIRPTVRGMAMNPIDHPLGGGEGRGKGRHPVTPWGQPCKGYKTRKKRNPSDSFIVSRRKKKN</sequence>
<accession>Q73PM9</accession>
<comment type="function">
    <text evidence="1">One of the primary rRNA binding proteins. Required for association of the 30S and 50S subunits to form the 70S ribosome, for tRNA binding and peptide bond formation. It has been suggested to have peptidyltransferase activity; this is somewhat controversial. Makes several contacts with the 16S rRNA in the 70S ribosome.</text>
</comment>
<comment type="subunit">
    <text evidence="1">Part of the 50S ribosomal subunit. Forms a bridge to the 30S subunit in the 70S ribosome.</text>
</comment>
<comment type="similarity">
    <text evidence="1">Belongs to the universal ribosomal protein uL2 family.</text>
</comment>
<keyword id="KW-1185">Reference proteome</keyword>
<keyword id="KW-0687">Ribonucleoprotein</keyword>
<keyword id="KW-0689">Ribosomal protein</keyword>
<keyword id="KW-0694">RNA-binding</keyword>
<keyword id="KW-0699">rRNA-binding</keyword>
<feature type="chain" id="PRO_0000237263" description="Large ribosomal subunit protein uL2">
    <location>
        <begin position="1"/>
        <end position="276"/>
    </location>
</feature>
<feature type="region of interest" description="Disordered" evidence="2">
    <location>
        <begin position="1"/>
        <end position="61"/>
    </location>
</feature>
<feature type="region of interest" description="Disordered" evidence="2">
    <location>
        <begin position="224"/>
        <end position="276"/>
    </location>
</feature>
<feature type="compositionally biased region" description="Basic and acidic residues" evidence="2">
    <location>
        <begin position="15"/>
        <end position="31"/>
    </location>
</feature>
<evidence type="ECO:0000255" key="1">
    <source>
        <dbReference type="HAMAP-Rule" id="MF_01320"/>
    </source>
</evidence>
<evidence type="ECO:0000256" key="2">
    <source>
        <dbReference type="SAM" id="MobiDB-lite"/>
    </source>
</evidence>
<evidence type="ECO:0000305" key="3"/>
<reference key="1">
    <citation type="journal article" date="2004" name="Proc. Natl. Acad. Sci. U.S.A.">
        <title>Comparison of the genome of the oral pathogen Treponema denticola with other spirochete genomes.</title>
        <authorList>
            <person name="Seshadri R."/>
            <person name="Myers G.S.A."/>
            <person name="Tettelin H."/>
            <person name="Eisen J.A."/>
            <person name="Heidelberg J.F."/>
            <person name="Dodson R.J."/>
            <person name="Davidsen T.M."/>
            <person name="DeBoy R.T."/>
            <person name="Fouts D.E."/>
            <person name="Haft D.H."/>
            <person name="Selengut J."/>
            <person name="Ren Q."/>
            <person name="Brinkac L.M."/>
            <person name="Madupu R."/>
            <person name="Kolonay J.F."/>
            <person name="Durkin S.A."/>
            <person name="Daugherty S.C."/>
            <person name="Shetty J."/>
            <person name="Shvartsbeyn A."/>
            <person name="Gebregeorgis E."/>
            <person name="Geer K."/>
            <person name="Tsegaye G."/>
            <person name="Malek J.A."/>
            <person name="Ayodeji B."/>
            <person name="Shatsman S."/>
            <person name="McLeod M.P."/>
            <person name="Smajs D."/>
            <person name="Howell J.K."/>
            <person name="Pal S."/>
            <person name="Amin A."/>
            <person name="Vashisth P."/>
            <person name="McNeill T.Z."/>
            <person name="Xiang Q."/>
            <person name="Sodergren E."/>
            <person name="Baca E."/>
            <person name="Weinstock G.M."/>
            <person name="Norris S.J."/>
            <person name="Fraser C.M."/>
            <person name="Paulsen I.T."/>
        </authorList>
    </citation>
    <scope>NUCLEOTIDE SEQUENCE [LARGE SCALE GENOMIC DNA]</scope>
    <source>
        <strain>ATCC 35405 / DSM 14222 / CIP 103919 / JCM 8153 / KCTC 15104</strain>
    </source>
</reference>
<organism>
    <name type="scientific">Treponema denticola (strain ATCC 35405 / DSM 14222 / CIP 103919 / JCM 8153 / KCTC 15104)</name>
    <dbReference type="NCBI Taxonomy" id="243275"/>
    <lineage>
        <taxon>Bacteria</taxon>
        <taxon>Pseudomonadati</taxon>
        <taxon>Spirochaetota</taxon>
        <taxon>Spirochaetia</taxon>
        <taxon>Spirochaetales</taxon>
        <taxon>Treponemataceae</taxon>
        <taxon>Treponema</taxon>
    </lineage>
</organism>
<gene>
    <name evidence="1" type="primary">rplB</name>
    <name type="ordered locus">TDE_0770</name>
</gene>